<gene>
    <name evidence="1" type="primary">dnaK</name>
    <name type="ordered locus">Patl_1987</name>
</gene>
<organism>
    <name type="scientific">Pseudoalteromonas atlantica (strain T6c / ATCC BAA-1087)</name>
    <dbReference type="NCBI Taxonomy" id="3042615"/>
    <lineage>
        <taxon>Bacteria</taxon>
        <taxon>Pseudomonadati</taxon>
        <taxon>Pseudomonadota</taxon>
        <taxon>Gammaproteobacteria</taxon>
        <taxon>Alteromonadales</taxon>
        <taxon>Alteromonadaceae</taxon>
        <taxon>Paraglaciecola</taxon>
    </lineage>
</organism>
<evidence type="ECO:0000255" key="1">
    <source>
        <dbReference type="HAMAP-Rule" id="MF_00332"/>
    </source>
</evidence>
<evidence type="ECO:0000256" key="2">
    <source>
        <dbReference type="SAM" id="MobiDB-lite"/>
    </source>
</evidence>
<keyword id="KW-0067">ATP-binding</keyword>
<keyword id="KW-0143">Chaperone</keyword>
<keyword id="KW-0547">Nucleotide-binding</keyword>
<keyword id="KW-0597">Phosphoprotein</keyword>
<keyword id="KW-0346">Stress response</keyword>
<name>DNAK_PSEA6</name>
<dbReference type="EMBL" id="CP000388">
    <property type="protein sequence ID" value="ABG40505.1"/>
    <property type="molecule type" value="Genomic_DNA"/>
</dbReference>
<dbReference type="RefSeq" id="WP_011574800.1">
    <property type="nucleotide sequence ID" value="NC_008228.1"/>
</dbReference>
<dbReference type="SMR" id="Q15UD3"/>
<dbReference type="STRING" id="342610.Patl_1987"/>
<dbReference type="KEGG" id="pat:Patl_1987"/>
<dbReference type="eggNOG" id="COG0443">
    <property type="taxonomic scope" value="Bacteria"/>
</dbReference>
<dbReference type="HOGENOM" id="CLU_005965_2_1_6"/>
<dbReference type="OrthoDB" id="9766019at2"/>
<dbReference type="Proteomes" id="UP000001981">
    <property type="component" value="Chromosome"/>
</dbReference>
<dbReference type="GO" id="GO:0005524">
    <property type="term" value="F:ATP binding"/>
    <property type="evidence" value="ECO:0007669"/>
    <property type="project" value="UniProtKB-UniRule"/>
</dbReference>
<dbReference type="GO" id="GO:0140662">
    <property type="term" value="F:ATP-dependent protein folding chaperone"/>
    <property type="evidence" value="ECO:0007669"/>
    <property type="project" value="InterPro"/>
</dbReference>
<dbReference type="GO" id="GO:0051082">
    <property type="term" value="F:unfolded protein binding"/>
    <property type="evidence" value="ECO:0007669"/>
    <property type="project" value="InterPro"/>
</dbReference>
<dbReference type="CDD" id="cd10234">
    <property type="entry name" value="ASKHA_NBD_HSP70_DnaK-like"/>
    <property type="match status" value="1"/>
</dbReference>
<dbReference type="FunFam" id="2.60.34.10:FF:000014">
    <property type="entry name" value="Chaperone protein DnaK HSP70"/>
    <property type="match status" value="1"/>
</dbReference>
<dbReference type="FunFam" id="1.20.1270.10:FF:000001">
    <property type="entry name" value="Molecular chaperone DnaK"/>
    <property type="match status" value="1"/>
</dbReference>
<dbReference type="FunFam" id="3.30.420.40:FF:000004">
    <property type="entry name" value="Molecular chaperone DnaK"/>
    <property type="match status" value="1"/>
</dbReference>
<dbReference type="FunFam" id="3.90.640.10:FF:000003">
    <property type="entry name" value="Molecular chaperone DnaK"/>
    <property type="match status" value="1"/>
</dbReference>
<dbReference type="Gene3D" id="1.20.1270.10">
    <property type="match status" value="1"/>
</dbReference>
<dbReference type="Gene3D" id="3.30.420.40">
    <property type="match status" value="2"/>
</dbReference>
<dbReference type="Gene3D" id="3.90.640.10">
    <property type="entry name" value="Actin, Chain A, domain 4"/>
    <property type="match status" value="1"/>
</dbReference>
<dbReference type="Gene3D" id="2.60.34.10">
    <property type="entry name" value="Substrate Binding Domain Of DNAk, Chain A, domain 1"/>
    <property type="match status" value="1"/>
</dbReference>
<dbReference type="HAMAP" id="MF_00332">
    <property type="entry name" value="DnaK"/>
    <property type="match status" value="1"/>
</dbReference>
<dbReference type="InterPro" id="IPR043129">
    <property type="entry name" value="ATPase_NBD"/>
</dbReference>
<dbReference type="InterPro" id="IPR012725">
    <property type="entry name" value="Chaperone_DnaK"/>
</dbReference>
<dbReference type="InterPro" id="IPR018181">
    <property type="entry name" value="Heat_shock_70_CS"/>
</dbReference>
<dbReference type="InterPro" id="IPR029048">
    <property type="entry name" value="HSP70_C_sf"/>
</dbReference>
<dbReference type="InterPro" id="IPR029047">
    <property type="entry name" value="HSP70_peptide-bd_sf"/>
</dbReference>
<dbReference type="InterPro" id="IPR013126">
    <property type="entry name" value="Hsp_70_fam"/>
</dbReference>
<dbReference type="NCBIfam" id="NF001413">
    <property type="entry name" value="PRK00290.1"/>
    <property type="match status" value="1"/>
</dbReference>
<dbReference type="NCBIfam" id="TIGR02350">
    <property type="entry name" value="prok_dnaK"/>
    <property type="match status" value="1"/>
</dbReference>
<dbReference type="PANTHER" id="PTHR19375">
    <property type="entry name" value="HEAT SHOCK PROTEIN 70KDA"/>
    <property type="match status" value="1"/>
</dbReference>
<dbReference type="Pfam" id="PF00012">
    <property type="entry name" value="HSP70"/>
    <property type="match status" value="1"/>
</dbReference>
<dbReference type="PRINTS" id="PR00301">
    <property type="entry name" value="HEATSHOCK70"/>
</dbReference>
<dbReference type="SUPFAM" id="SSF53067">
    <property type="entry name" value="Actin-like ATPase domain"/>
    <property type="match status" value="2"/>
</dbReference>
<dbReference type="SUPFAM" id="SSF100934">
    <property type="entry name" value="Heat shock protein 70kD (HSP70), C-terminal subdomain"/>
    <property type="match status" value="1"/>
</dbReference>
<dbReference type="SUPFAM" id="SSF100920">
    <property type="entry name" value="Heat shock protein 70kD (HSP70), peptide-binding domain"/>
    <property type="match status" value="1"/>
</dbReference>
<dbReference type="PROSITE" id="PS00297">
    <property type="entry name" value="HSP70_1"/>
    <property type="match status" value="1"/>
</dbReference>
<dbReference type="PROSITE" id="PS00329">
    <property type="entry name" value="HSP70_2"/>
    <property type="match status" value="1"/>
</dbReference>
<dbReference type="PROSITE" id="PS01036">
    <property type="entry name" value="HSP70_3"/>
    <property type="match status" value="1"/>
</dbReference>
<proteinExistence type="inferred from homology"/>
<reference key="1">
    <citation type="submission" date="2006-06" db="EMBL/GenBank/DDBJ databases">
        <title>Complete sequence of Pseudoalteromonas atlantica T6c.</title>
        <authorList>
            <consortium name="US DOE Joint Genome Institute"/>
            <person name="Copeland A."/>
            <person name="Lucas S."/>
            <person name="Lapidus A."/>
            <person name="Barry K."/>
            <person name="Detter J.C."/>
            <person name="Glavina del Rio T."/>
            <person name="Hammon N."/>
            <person name="Israni S."/>
            <person name="Dalin E."/>
            <person name="Tice H."/>
            <person name="Pitluck S."/>
            <person name="Saunders E."/>
            <person name="Brettin T."/>
            <person name="Bruce D."/>
            <person name="Han C."/>
            <person name="Tapia R."/>
            <person name="Gilna P."/>
            <person name="Schmutz J."/>
            <person name="Larimer F."/>
            <person name="Land M."/>
            <person name="Hauser L."/>
            <person name="Kyrpides N."/>
            <person name="Kim E."/>
            <person name="Karls A.C."/>
            <person name="Bartlett D."/>
            <person name="Higgins B.P."/>
            <person name="Richardson P."/>
        </authorList>
    </citation>
    <scope>NUCLEOTIDE SEQUENCE [LARGE SCALE GENOMIC DNA]</scope>
    <source>
        <strain>T6c / ATCC BAA-1087</strain>
    </source>
</reference>
<comment type="function">
    <text evidence="1">Acts as a chaperone.</text>
</comment>
<comment type="induction">
    <text evidence="1">By stress conditions e.g. heat shock.</text>
</comment>
<comment type="similarity">
    <text evidence="1">Belongs to the heat shock protein 70 family.</text>
</comment>
<protein>
    <recommendedName>
        <fullName evidence="1">Chaperone protein DnaK</fullName>
    </recommendedName>
    <alternativeName>
        <fullName evidence="1">HSP70</fullName>
    </alternativeName>
    <alternativeName>
        <fullName evidence="1">Heat shock 70 kDa protein</fullName>
    </alternativeName>
    <alternativeName>
        <fullName evidence="1">Heat shock protein 70</fullName>
    </alternativeName>
</protein>
<accession>Q15UD3</accession>
<sequence>MGRIIGIDLGTTNSCVAVLDGEKAKVIENAEGDRTTPSIIAYSQDGETLVGQPAKRQAITNPKNTLFAIKRLIGRRFEDKEVQRDIDIMPFDIIKADNGDAWVQAKDEKLAPPQISAEVLKKMKKTAEDYLGEEVTAAVITVPAYFNDSQRQATKDAGRIAGLEVKRIINEPTAAALAYGMDKKKGDSVVAVYDLGGGTFDISIIEIDEADGEHTFEVLATNGDTHLGGEDFDNQVINYLVEEFKKDSGMDLRKDPLAMQRLKEAGEKAKIELSSAQQTEVNLPYITADASGPKHLTIKLTRAKLESLVEKMVKATLEPLKQALADADLSVGDINDIILVGGQTRMPLVQKYVTEFFGKEPRKDVNPDEAVAVGAAIQGGVLSGDVKDVLLLDVTPLSLGIETMGGVMTALIEKNTTVPTKKSQTFSTAEDNQSAVTVHVLQGERKQAAGNKSLGQFNLEGIRPAQRGAPQIEVTFDIDADGILHVSAKDKDTNKEQKITIKASSGLSDDEVEKMVQDAEANKEADKQFEEMVQARNQADGLIHGTRKQVEEAGDALSDEDKAEIEAAVVALEEAVKAGEKEAIESKTQELIQASAKLMEVAQAQQAAAGAEGQPEDASAKQDDDVVDAEFEEVKDDKK</sequence>
<feature type="chain" id="PRO_1000059630" description="Chaperone protein DnaK">
    <location>
        <begin position="1"/>
        <end position="639"/>
    </location>
</feature>
<feature type="region of interest" description="Disordered" evidence="2">
    <location>
        <begin position="602"/>
        <end position="639"/>
    </location>
</feature>
<feature type="compositionally biased region" description="Low complexity" evidence="2">
    <location>
        <begin position="602"/>
        <end position="613"/>
    </location>
</feature>
<feature type="compositionally biased region" description="Acidic residues" evidence="2">
    <location>
        <begin position="625"/>
        <end position="639"/>
    </location>
</feature>
<feature type="modified residue" description="Phosphothreonine; by autocatalysis" evidence="1">
    <location>
        <position position="199"/>
    </location>
</feature>